<name>GUF1_DICDI</name>
<feature type="transit peptide" description="Mitochondrion" evidence="1">
    <location>
        <begin position="1"/>
        <end position="54"/>
    </location>
</feature>
<feature type="chain" id="PRO_0000402842" description="Translation factor GUF1 homolog, mitochondrial">
    <location>
        <begin position="55"/>
        <end position="685"/>
    </location>
</feature>
<feature type="domain" description="tr-type G">
    <location>
        <begin position="68"/>
        <end position="267"/>
    </location>
</feature>
<feature type="binding site" evidence="1">
    <location>
        <begin position="77"/>
        <end position="84"/>
    </location>
    <ligand>
        <name>GTP</name>
        <dbReference type="ChEBI" id="CHEBI:37565"/>
    </ligand>
</feature>
<feature type="binding site" evidence="1">
    <location>
        <begin position="160"/>
        <end position="164"/>
    </location>
    <ligand>
        <name>GTP</name>
        <dbReference type="ChEBI" id="CHEBI:37565"/>
    </ligand>
</feature>
<feature type="binding site" evidence="1">
    <location>
        <begin position="214"/>
        <end position="217"/>
    </location>
    <ligand>
        <name>GTP</name>
        <dbReference type="ChEBI" id="CHEBI:37565"/>
    </ligand>
</feature>
<proteinExistence type="inferred from homology"/>
<protein>
    <recommendedName>
        <fullName evidence="1">Translation factor GUF1 homolog, mitochondrial</fullName>
        <ecNumber>3.6.5.-</ecNumber>
    </recommendedName>
    <alternativeName>
        <fullName evidence="1">Elongation factor 4 homolog</fullName>
        <shortName evidence="1">EF-4</shortName>
    </alternativeName>
    <alternativeName>
        <fullName evidence="1">GTPase GUF1 homolog</fullName>
    </alternativeName>
    <alternativeName>
        <fullName evidence="1">Ribosomal back-translocase</fullName>
    </alternativeName>
</protein>
<evidence type="ECO:0000255" key="1">
    <source>
        <dbReference type="HAMAP-Rule" id="MF_03137"/>
    </source>
</evidence>
<evidence type="ECO:0000305" key="2"/>
<sequence length="685" mass="76394">MFSRLLNRGNGGVNKNITSGLLLRRTTTTTTRLSYINNSPTLSIRSFCSKSTTITSDEKLDLSGYTTDRIRNFSIIAHIDHGKTTLSTKLLSLTGTLPKSIYGSGEDSLVQKEKSEERREQYLDKLQVEKERGITVKAQTCTMKYRNKEDGKDYLLNLIDTPGHVDFSYEVSRSLMACQGALLVVDAVQGVQAQTMANYYLALDSGLEVIPVINKIDLPTADVERVKQELKDAFGFHPDDAVLVSAKTGVGITDILPAVIDRIPPPQEPTKSPKVPFKALLFDSWFDRFRGVICLIKVVDGKVKKGDSIVSAGNKQTYEVFDVGIMHPEQRPAPSLFTGQVGYITPGMKTSKEARVGDTFYMKDFPVEPLPGFQPAKQMVFAGIYPVDSLDYTQLRESFEKLMLTDSSISMTNETSVALGMGFRCGFLGLLHMDVVLQRLEQEYGQVVIATPPTVPYRCLLTDGKEILISNPAGYPSAEHLSKTFEPMVTGHVTLPTEYFGAVVKLCMDSRGILTNQETLEGNRTRITFNFPLGEIVTDFYDNLKRISSGYASLDYEDNGYQESDVAKVRVLLNGEEVDSLSAIVHKSNAQRYSRSLVKRLRKVIDRQMFQVNIQAMVGSDVQARETISAMRKDVTAKCYGGDITRRRKLLDKQKEGKKRMKQMGCVELSQEGFLKLMKSTNDDD</sequence>
<dbReference type="EC" id="3.6.5.-"/>
<dbReference type="EMBL" id="AAFI02000181">
    <property type="protein sequence ID" value="EDR41019.1"/>
    <property type="molecule type" value="Genomic_DNA"/>
</dbReference>
<dbReference type="RefSeq" id="XP_001733053.1">
    <property type="nucleotide sequence ID" value="XM_001733001.1"/>
</dbReference>
<dbReference type="SMR" id="B0G189"/>
<dbReference type="FunCoup" id="B0G189">
    <property type="interactions" value="608"/>
</dbReference>
<dbReference type="STRING" id="44689.B0G189"/>
<dbReference type="GlyGen" id="B0G189">
    <property type="glycosylation" value="1 site"/>
</dbReference>
<dbReference type="PaxDb" id="44689-DDB0235362"/>
<dbReference type="EnsemblProtists" id="EDR41019">
    <property type="protein sequence ID" value="EDR41019"/>
    <property type="gene ID" value="DDB_G0291708"/>
</dbReference>
<dbReference type="GeneID" id="8628289"/>
<dbReference type="KEGG" id="ddi:DDB_G0291708"/>
<dbReference type="dictyBase" id="DDB_G0291708">
    <property type="gene designation" value="guf1"/>
</dbReference>
<dbReference type="VEuPathDB" id="AmoebaDB:DDB_G0291708"/>
<dbReference type="eggNOG" id="KOG0462">
    <property type="taxonomic scope" value="Eukaryota"/>
</dbReference>
<dbReference type="HOGENOM" id="CLU_009995_3_3_1"/>
<dbReference type="InParanoid" id="B0G189"/>
<dbReference type="OMA" id="QVKCDEN"/>
<dbReference type="PhylomeDB" id="B0G189"/>
<dbReference type="PRO" id="PR:B0G189"/>
<dbReference type="Proteomes" id="UP000002195">
    <property type="component" value="Chromosome 6"/>
</dbReference>
<dbReference type="GO" id="GO:0005743">
    <property type="term" value="C:mitochondrial inner membrane"/>
    <property type="evidence" value="ECO:0007669"/>
    <property type="project" value="UniProtKB-SubCell"/>
</dbReference>
<dbReference type="GO" id="GO:0005759">
    <property type="term" value="C:mitochondrial matrix"/>
    <property type="evidence" value="ECO:0007669"/>
    <property type="project" value="UniProtKB-UniRule"/>
</dbReference>
<dbReference type="GO" id="GO:0005739">
    <property type="term" value="C:mitochondrion"/>
    <property type="evidence" value="ECO:0000250"/>
    <property type="project" value="dictyBase"/>
</dbReference>
<dbReference type="GO" id="GO:0005525">
    <property type="term" value="F:GTP binding"/>
    <property type="evidence" value="ECO:0007669"/>
    <property type="project" value="UniProtKB-UniRule"/>
</dbReference>
<dbReference type="GO" id="GO:0003924">
    <property type="term" value="F:GTPase activity"/>
    <property type="evidence" value="ECO:0007669"/>
    <property type="project" value="UniProtKB-UniRule"/>
</dbReference>
<dbReference type="GO" id="GO:0097177">
    <property type="term" value="F:mitochondrial ribosome binding"/>
    <property type="evidence" value="ECO:0000318"/>
    <property type="project" value="GO_Central"/>
</dbReference>
<dbReference type="GO" id="GO:0045727">
    <property type="term" value="P:positive regulation of translation"/>
    <property type="evidence" value="ECO:0000318"/>
    <property type="project" value="GO_Central"/>
</dbReference>
<dbReference type="GO" id="GO:0006412">
    <property type="term" value="P:translation"/>
    <property type="evidence" value="ECO:0007669"/>
    <property type="project" value="UniProtKB-KW"/>
</dbReference>
<dbReference type="CDD" id="cd03699">
    <property type="entry name" value="EF4_II"/>
    <property type="match status" value="1"/>
</dbReference>
<dbReference type="CDD" id="cd16260">
    <property type="entry name" value="EF4_III"/>
    <property type="match status" value="1"/>
</dbReference>
<dbReference type="CDD" id="cd01890">
    <property type="entry name" value="LepA"/>
    <property type="match status" value="1"/>
</dbReference>
<dbReference type="CDD" id="cd03709">
    <property type="entry name" value="lepA_C"/>
    <property type="match status" value="1"/>
</dbReference>
<dbReference type="FunFam" id="3.40.50.300:FF:000078">
    <property type="entry name" value="Elongation factor 4"/>
    <property type="match status" value="1"/>
</dbReference>
<dbReference type="FunFam" id="2.40.30.10:FF:000015">
    <property type="entry name" value="Translation factor GUF1, mitochondrial"/>
    <property type="match status" value="1"/>
</dbReference>
<dbReference type="FunFam" id="3.30.70.240:FF:000007">
    <property type="entry name" value="Translation factor GUF1, mitochondrial"/>
    <property type="match status" value="1"/>
</dbReference>
<dbReference type="FunFam" id="3.30.70.2570:FF:000001">
    <property type="entry name" value="Translation factor GUF1, mitochondrial"/>
    <property type="match status" value="1"/>
</dbReference>
<dbReference type="FunFam" id="3.30.70.870:FF:000004">
    <property type="entry name" value="Translation factor GUF1, mitochondrial"/>
    <property type="match status" value="1"/>
</dbReference>
<dbReference type="Gene3D" id="3.30.70.240">
    <property type="match status" value="1"/>
</dbReference>
<dbReference type="Gene3D" id="3.30.70.2570">
    <property type="entry name" value="Elongation factor 4, C-terminal domain"/>
    <property type="match status" value="1"/>
</dbReference>
<dbReference type="Gene3D" id="3.30.70.870">
    <property type="entry name" value="Elongation Factor G (Translational Gtpase), domain 3"/>
    <property type="match status" value="1"/>
</dbReference>
<dbReference type="Gene3D" id="3.40.50.300">
    <property type="entry name" value="P-loop containing nucleotide triphosphate hydrolases"/>
    <property type="match status" value="1"/>
</dbReference>
<dbReference type="Gene3D" id="2.40.30.10">
    <property type="entry name" value="Translation factors"/>
    <property type="match status" value="1"/>
</dbReference>
<dbReference type="HAMAP" id="MF_00071">
    <property type="entry name" value="LepA"/>
    <property type="match status" value="1"/>
</dbReference>
<dbReference type="InterPro" id="IPR006297">
    <property type="entry name" value="EF-4"/>
</dbReference>
<dbReference type="InterPro" id="IPR035647">
    <property type="entry name" value="EFG_III/V"/>
</dbReference>
<dbReference type="InterPro" id="IPR000640">
    <property type="entry name" value="EFG_V-like"/>
</dbReference>
<dbReference type="InterPro" id="IPR004161">
    <property type="entry name" value="EFTu-like_2"/>
</dbReference>
<dbReference type="InterPro" id="IPR031157">
    <property type="entry name" value="G_TR_CS"/>
</dbReference>
<dbReference type="InterPro" id="IPR038363">
    <property type="entry name" value="LepA_C_sf"/>
</dbReference>
<dbReference type="InterPro" id="IPR013842">
    <property type="entry name" value="LepA_CTD"/>
</dbReference>
<dbReference type="InterPro" id="IPR035654">
    <property type="entry name" value="LepA_IV"/>
</dbReference>
<dbReference type="InterPro" id="IPR027417">
    <property type="entry name" value="P-loop_NTPase"/>
</dbReference>
<dbReference type="InterPro" id="IPR005225">
    <property type="entry name" value="Small_GTP-bd"/>
</dbReference>
<dbReference type="InterPro" id="IPR000795">
    <property type="entry name" value="T_Tr_GTP-bd_dom"/>
</dbReference>
<dbReference type="InterPro" id="IPR009000">
    <property type="entry name" value="Transl_B-barrel_sf"/>
</dbReference>
<dbReference type="NCBIfam" id="TIGR01393">
    <property type="entry name" value="lepA"/>
    <property type="match status" value="1"/>
</dbReference>
<dbReference type="NCBIfam" id="TIGR00231">
    <property type="entry name" value="small_GTP"/>
    <property type="match status" value="1"/>
</dbReference>
<dbReference type="PANTHER" id="PTHR43512:SF7">
    <property type="entry name" value="TRANSLATION FACTOR GUF1, MITOCHONDRIAL"/>
    <property type="match status" value="1"/>
</dbReference>
<dbReference type="PANTHER" id="PTHR43512">
    <property type="entry name" value="TRANSLATION FACTOR GUF1-RELATED"/>
    <property type="match status" value="1"/>
</dbReference>
<dbReference type="Pfam" id="PF00679">
    <property type="entry name" value="EFG_C"/>
    <property type="match status" value="1"/>
</dbReference>
<dbReference type="Pfam" id="PF00009">
    <property type="entry name" value="GTP_EFTU"/>
    <property type="match status" value="1"/>
</dbReference>
<dbReference type="Pfam" id="PF03144">
    <property type="entry name" value="GTP_EFTU_D2"/>
    <property type="match status" value="1"/>
</dbReference>
<dbReference type="Pfam" id="PF06421">
    <property type="entry name" value="LepA_C"/>
    <property type="match status" value="1"/>
</dbReference>
<dbReference type="PRINTS" id="PR00315">
    <property type="entry name" value="ELONGATNFCT"/>
</dbReference>
<dbReference type="SUPFAM" id="SSF54980">
    <property type="entry name" value="EF-G C-terminal domain-like"/>
    <property type="match status" value="2"/>
</dbReference>
<dbReference type="SUPFAM" id="SSF52540">
    <property type="entry name" value="P-loop containing nucleoside triphosphate hydrolases"/>
    <property type="match status" value="1"/>
</dbReference>
<dbReference type="SUPFAM" id="SSF50447">
    <property type="entry name" value="Translation proteins"/>
    <property type="match status" value="1"/>
</dbReference>
<dbReference type="PROSITE" id="PS00301">
    <property type="entry name" value="G_TR_1"/>
    <property type="match status" value="1"/>
</dbReference>
<dbReference type="PROSITE" id="PS51722">
    <property type="entry name" value="G_TR_2"/>
    <property type="match status" value="1"/>
</dbReference>
<organism>
    <name type="scientific">Dictyostelium discoideum</name>
    <name type="common">Social amoeba</name>
    <dbReference type="NCBI Taxonomy" id="44689"/>
    <lineage>
        <taxon>Eukaryota</taxon>
        <taxon>Amoebozoa</taxon>
        <taxon>Evosea</taxon>
        <taxon>Eumycetozoa</taxon>
        <taxon>Dictyostelia</taxon>
        <taxon>Dictyosteliales</taxon>
        <taxon>Dictyosteliaceae</taxon>
        <taxon>Dictyostelium</taxon>
    </lineage>
</organism>
<gene>
    <name type="primary">guf1</name>
    <name type="ORF">DDB_G0291708</name>
</gene>
<reference key="1">
    <citation type="journal article" date="2005" name="Nature">
        <title>The genome of the social amoeba Dictyostelium discoideum.</title>
        <authorList>
            <person name="Eichinger L."/>
            <person name="Pachebat J.A."/>
            <person name="Gloeckner G."/>
            <person name="Rajandream M.A."/>
            <person name="Sucgang R."/>
            <person name="Berriman M."/>
            <person name="Song J."/>
            <person name="Olsen R."/>
            <person name="Szafranski K."/>
            <person name="Xu Q."/>
            <person name="Tunggal B."/>
            <person name="Kummerfeld S."/>
            <person name="Madera M."/>
            <person name="Konfortov B.A."/>
            <person name="Rivero F."/>
            <person name="Bankier A.T."/>
            <person name="Lehmann R."/>
            <person name="Hamlin N."/>
            <person name="Davies R."/>
            <person name="Gaudet P."/>
            <person name="Fey P."/>
            <person name="Pilcher K."/>
            <person name="Chen G."/>
            <person name="Saunders D."/>
            <person name="Sodergren E.J."/>
            <person name="Davis P."/>
            <person name="Kerhornou A."/>
            <person name="Nie X."/>
            <person name="Hall N."/>
            <person name="Anjard C."/>
            <person name="Hemphill L."/>
            <person name="Bason N."/>
            <person name="Farbrother P."/>
            <person name="Desany B."/>
            <person name="Just E."/>
            <person name="Morio T."/>
            <person name="Rost R."/>
            <person name="Churcher C.M."/>
            <person name="Cooper J."/>
            <person name="Haydock S."/>
            <person name="van Driessche N."/>
            <person name="Cronin A."/>
            <person name="Goodhead I."/>
            <person name="Muzny D.M."/>
            <person name="Mourier T."/>
            <person name="Pain A."/>
            <person name="Lu M."/>
            <person name="Harper D."/>
            <person name="Lindsay R."/>
            <person name="Hauser H."/>
            <person name="James K.D."/>
            <person name="Quiles M."/>
            <person name="Madan Babu M."/>
            <person name="Saito T."/>
            <person name="Buchrieser C."/>
            <person name="Wardroper A."/>
            <person name="Felder M."/>
            <person name="Thangavelu M."/>
            <person name="Johnson D."/>
            <person name="Knights A."/>
            <person name="Loulseged H."/>
            <person name="Mungall K.L."/>
            <person name="Oliver K."/>
            <person name="Price C."/>
            <person name="Quail M.A."/>
            <person name="Urushihara H."/>
            <person name="Hernandez J."/>
            <person name="Rabbinowitsch E."/>
            <person name="Steffen D."/>
            <person name="Sanders M."/>
            <person name="Ma J."/>
            <person name="Kohara Y."/>
            <person name="Sharp S."/>
            <person name="Simmonds M.N."/>
            <person name="Spiegler S."/>
            <person name="Tivey A."/>
            <person name="Sugano S."/>
            <person name="White B."/>
            <person name="Walker D."/>
            <person name="Woodward J.R."/>
            <person name="Winckler T."/>
            <person name="Tanaka Y."/>
            <person name="Shaulsky G."/>
            <person name="Schleicher M."/>
            <person name="Weinstock G.M."/>
            <person name="Rosenthal A."/>
            <person name="Cox E.C."/>
            <person name="Chisholm R.L."/>
            <person name="Gibbs R.A."/>
            <person name="Loomis W.F."/>
            <person name="Platzer M."/>
            <person name="Kay R.R."/>
            <person name="Williams J.G."/>
            <person name="Dear P.H."/>
            <person name="Noegel A.A."/>
            <person name="Barrell B.G."/>
            <person name="Kuspa A."/>
        </authorList>
    </citation>
    <scope>NUCLEOTIDE SEQUENCE [LARGE SCALE GENOMIC DNA]</scope>
    <source>
        <strain>AX4</strain>
    </source>
</reference>
<keyword id="KW-0342">GTP-binding</keyword>
<keyword id="KW-0378">Hydrolase</keyword>
<keyword id="KW-0472">Membrane</keyword>
<keyword id="KW-0496">Mitochondrion</keyword>
<keyword id="KW-0999">Mitochondrion inner membrane</keyword>
<keyword id="KW-0547">Nucleotide-binding</keyword>
<keyword id="KW-0648">Protein biosynthesis</keyword>
<keyword id="KW-1185">Reference proteome</keyword>
<keyword id="KW-0809">Transit peptide</keyword>
<comment type="function">
    <text evidence="1">Promotes mitochondrial protein synthesis. May act as a fidelity factor of the translation reaction, by catalyzing a one-codon backward translocation of tRNAs on improperly translocated ribosomes. Binds to mitochondrial ribosomes in a GTP-dependent manner.</text>
</comment>
<comment type="catalytic activity">
    <reaction evidence="1">
        <text>GTP + H2O = GDP + phosphate + H(+)</text>
        <dbReference type="Rhea" id="RHEA:19669"/>
        <dbReference type="ChEBI" id="CHEBI:15377"/>
        <dbReference type="ChEBI" id="CHEBI:15378"/>
        <dbReference type="ChEBI" id="CHEBI:37565"/>
        <dbReference type="ChEBI" id="CHEBI:43474"/>
        <dbReference type="ChEBI" id="CHEBI:58189"/>
    </reaction>
</comment>
<comment type="subcellular location">
    <subcellularLocation>
        <location evidence="1">Mitochondrion inner membrane</location>
        <topology evidence="1">Peripheral membrane protein</topology>
        <orientation evidence="1">Matrix side</orientation>
    </subcellularLocation>
</comment>
<comment type="similarity">
    <text evidence="2">Belongs to the TRAFAC class translation factor GTPase superfamily. Classic translation factor GTPase family. LepA subfamily.</text>
</comment>
<accession>B0G189</accession>